<accession>Q7VDN2</accession>
<reference key="1">
    <citation type="journal article" date="2003" name="Proc. Natl. Acad. Sci. U.S.A.">
        <title>Genome sequence of the cyanobacterium Prochlorococcus marinus SS120, a nearly minimal oxyphototrophic genome.</title>
        <authorList>
            <person name="Dufresne A."/>
            <person name="Salanoubat M."/>
            <person name="Partensky F."/>
            <person name="Artiguenave F."/>
            <person name="Axmann I.M."/>
            <person name="Barbe V."/>
            <person name="Duprat S."/>
            <person name="Galperin M.Y."/>
            <person name="Koonin E.V."/>
            <person name="Le Gall F."/>
            <person name="Makarova K.S."/>
            <person name="Ostrowski M."/>
            <person name="Oztas S."/>
            <person name="Robert C."/>
            <person name="Rogozin I.B."/>
            <person name="Scanlan D.J."/>
            <person name="Tandeau de Marsac N."/>
            <person name="Weissenbach J."/>
            <person name="Wincker P."/>
            <person name="Wolf Y.I."/>
            <person name="Hess W.R."/>
        </authorList>
    </citation>
    <scope>NUCLEOTIDE SEQUENCE [LARGE SCALE GENOMIC DNA]</scope>
    <source>
        <strain>SARG / CCMP1375 / SS120</strain>
    </source>
</reference>
<reference key="2">
    <citation type="journal article" date="2005" name="Environ. Microbiol.">
        <title>A green light-absorbing phycoerythrin is present in the high-light-adapted marine cyanobacterium Prochlorococcus sp. MED4.</title>
        <authorList>
            <person name="Steglich C."/>
            <person name="Frankenberg-Dinkel N."/>
            <person name="Penno S."/>
            <person name="Hess W.R."/>
        </authorList>
    </citation>
    <scope>INDUCTION</scope>
</reference>
<comment type="function">
    <text evidence="1">Green-light absorbing phycoerythrin of unknown function.</text>
</comment>
<comment type="subunit">
    <text evidence="1">Homodimer.</text>
</comment>
<comment type="induction">
    <text evidence="2">Constitutively expressed at low levels.</text>
</comment>
<comment type="PTM">
    <text evidence="1">Contains one covalently linked phycoerythrobilin chromophore.</text>
</comment>
<comment type="miscellaneous">
    <text>Prochlorococcus does not possess phycobilisomes, instead it uses a divinyl-chlorophyll antenna complex for light harvesting.</text>
</comment>
<comment type="similarity">
    <text evidence="3">Belongs to the phycobiliprotein family.</text>
</comment>
<keyword id="KW-0089">Bile pigment</keyword>
<keyword id="KW-0157">Chromophore</keyword>
<keyword id="KW-1185">Reference proteome</keyword>
<dbReference type="EMBL" id="AE017126">
    <property type="protein sequence ID" value="AAP99383.1"/>
    <property type="molecule type" value="Genomic_DNA"/>
</dbReference>
<dbReference type="RefSeq" id="NP_874731.1">
    <property type="nucleotide sequence ID" value="NC_005042.1"/>
</dbReference>
<dbReference type="RefSeq" id="WP_011124492.1">
    <property type="nucleotide sequence ID" value="NC_005042.1"/>
</dbReference>
<dbReference type="SMR" id="Q7VDN2"/>
<dbReference type="STRING" id="167539.Pro_0337"/>
<dbReference type="EnsemblBacteria" id="AAP99383">
    <property type="protein sequence ID" value="AAP99383"/>
    <property type="gene ID" value="Pro_0337"/>
</dbReference>
<dbReference type="KEGG" id="pma:Pro_0337"/>
<dbReference type="PATRIC" id="fig|167539.5.peg.346"/>
<dbReference type="eggNOG" id="ENOG502ZAPU">
    <property type="taxonomic scope" value="Bacteria"/>
</dbReference>
<dbReference type="HOGENOM" id="CLU_104219_0_0_3"/>
<dbReference type="OrthoDB" id="512145at2"/>
<dbReference type="Proteomes" id="UP000001420">
    <property type="component" value="Chromosome"/>
</dbReference>
<dbReference type="GO" id="GO:0030089">
    <property type="term" value="C:phycobilisome"/>
    <property type="evidence" value="ECO:0007669"/>
    <property type="project" value="InterPro"/>
</dbReference>
<dbReference type="GO" id="GO:0015979">
    <property type="term" value="P:photosynthesis"/>
    <property type="evidence" value="ECO:0007669"/>
    <property type="project" value="InterPro"/>
</dbReference>
<dbReference type="CDD" id="cd12127">
    <property type="entry name" value="PE-PC-PEC_beta"/>
    <property type="match status" value="1"/>
</dbReference>
<dbReference type="Gene3D" id="1.10.490.20">
    <property type="entry name" value="Phycocyanins"/>
    <property type="match status" value="1"/>
</dbReference>
<dbReference type="InterPro" id="IPR009050">
    <property type="entry name" value="Globin-like_sf"/>
</dbReference>
<dbReference type="InterPro" id="IPR012128">
    <property type="entry name" value="Phycobilisome_asu/bsu"/>
</dbReference>
<dbReference type="InterPro" id="IPR038719">
    <property type="entry name" value="Phycobilisome_asu/bsu_sf"/>
</dbReference>
<dbReference type="PANTHER" id="PTHR34011:SF7">
    <property type="entry name" value="C-PHYCOCYANIN BETA SUBUNIT"/>
    <property type="match status" value="1"/>
</dbReference>
<dbReference type="PANTHER" id="PTHR34011">
    <property type="entry name" value="PHYCOBILISOME 32.1 KDA LINKER POLYPEPTIDE, PHYCOCYANIN-ASSOCIATED, ROD 2-RELATED"/>
    <property type="match status" value="1"/>
</dbReference>
<dbReference type="Pfam" id="PF00502">
    <property type="entry name" value="Phycobilisome"/>
    <property type="match status" value="1"/>
</dbReference>
<dbReference type="PIRSF" id="PIRSF000081">
    <property type="entry name" value="Phycocyanin"/>
    <property type="match status" value="1"/>
</dbReference>
<dbReference type="SUPFAM" id="SSF46458">
    <property type="entry name" value="Globin-like"/>
    <property type="match status" value="1"/>
</dbReference>
<feature type="chain" id="PRO_0000403182" description="R-phycoerythrin subunit beta">
    <location>
        <begin position="1"/>
        <end position="182"/>
    </location>
</feature>
<feature type="binding site" description="covalent" evidence="1">
    <location>
        <position position="82"/>
    </location>
    <ligand>
        <name>(2R,3E)-phycoerythrobilin</name>
        <dbReference type="ChEBI" id="CHEBI:85276"/>
        <label>1</label>
    </ligand>
</feature>
<organism>
    <name type="scientific">Prochlorococcus marinus (strain SARG / CCMP1375 / SS120)</name>
    <dbReference type="NCBI Taxonomy" id="167539"/>
    <lineage>
        <taxon>Bacteria</taxon>
        <taxon>Bacillati</taxon>
        <taxon>Cyanobacteriota</taxon>
        <taxon>Cyanophyceae</taxon>
        <taxon>Synechococcales</taxon>
        <taxon>Prochlorococcaceae</taxon>
        <taxon>Prochlorococcus</taxon>
    </lineage>
</organism>
<evidence type="ECO:0000250" key="1"/>
<evidence type="ECO:0000269" key="2">
    <source>
    </source>
</evidence>
<evidence type="ECO:0000305" key="3"/>
<proteinExistence type="evidence at transcript level"/>
<sequence>MLDAFSRAVVSADSKGATIGSAELSSLRKYVADANKRIDATLAITQNVSCIAADAISGMVCENTGLTQPGGHCYPTRRMAACLRDGEIILRYVSYALLAGDPSVLDDRCINGLKETYIALGVPLSNAIRAIEIMKIATVAIMTETNSGRKMFEGINSGSGAECKDIASEAASYFDRVIDALN</sequence>
<protein>
    <recommendedName>
        <fullName>R-phycoerythrin subunit beta</fullName>
    </recommendedName>
</protein>
<gene>
    <name type="primary">cpeB</name>
    <name type="ordered locus">Pro_0337</name>
</gene>
<name>PHEB_PROMA</name>